<proteinExistence type="inferred from homology"/>
<name>QUEC_XYLF2</name>
<organism>
    <name type="scientific">Xylella fastidiosa (strain M23)</name>
    <dbReference type="NCBI Taxonomy" id="405441"/>
    <lineage>
        <taxon>Bacteria</taxon>
        <taxon>Pseudomonadati</taxon>
        <taxon>Pseudomonadota</taxon>
        <taxon>Gammaproteobacteria</taxon>
        <taxon>Lysobacterales</taxon>
        <taxon>Lysobacteraceae</taxon>
        <taxon>Xylella</taxon>
    </lineage>
</organism>
<gene>
    <name evidence="1" type="primary">queC</name>
    <name type="ordered locus">XfasM23_0998</name>
</gene>
<protein>
    <recommendedName>
        <fullName evidence="1">7-cyano-7-deazaguanine synthase</fullName>
        <ecNumber evidence="1">6.3.4.20</ecNumber>
    </recommendedName>
    <alternativeName>
        <fullName evidence="1">7-cyano-7-carbaguanine synthase</fullName>
    </alternativeName>
    <alternativeName>
        <fullName evidence="1">PreQ(0) synthase</fullName>
    </alternativeName>
    <alternativeName>
        <fullName evidence="1">Queuosine biosynthesis protein QueC</fullName>
    </alternativeName>
</protein>
<keyword id="KW-0067">ATP-binding</keyword>
<keyword id="KW-0436">Ligase</keyword>
<keyword id="KW-0479">Metal-binding</keyword>
<keyword id="KW-0547">Nucleotide-binding</keyword>
<keyword id="KW-0671">Queuosine biosynthesis</keyword>
<keyword id="KW-0862">Zinc</keyword>
<reference key="1">
    <citation type="journal article" date="2010" name="J. Bacteriol.">
        <title>Whole genome sequences of two Xylella fastidiosa strains (M12 and M23) causing almond leaf scorch disease in California.</title>
        <authorList>
            <person name="Chen J."/>
            <person name="Xie G."/>
            <person name="Han S."/>
            <person name="Chertkov O."/>
            <person name="Sims D."/>
            <person name="Civerolo E.L."/>
        </authorList>
    </citation>
    <scope>NUCLEOTIDE SEQUENCE [LARGE SCALE GENOMIC DNA]</scope>
    <source>
        <strain>M23</strain>
    </source>
</reference>
<comment type="function">
    <text evidence="1">Catalyzes the ATP-dependent conversion of 7-carboxy-7-deazaguanine (CDG) to 7-cyano-7-deazaguanine (preQ(0)).</text>
</comment>
<comment type="catalytic activity">
    <reaction evidence="1">
        <text>7-carboxy-7-deazaguanine + NH4(+) + ATP = 7-cyano-7-deazaguanine + ADP + phosphate + H2O + H(+)</text>
        <dbReference type="Rhea" id="RHEA:27982"/>
        <dbReference type="ChEBI" id="CHEBI:15377"/>
        <dbReference type="ChEBI" id="CHEBI:15378"/>
        <dbReference type="ChEBI" id="CHEBI:28938"/>
        <dbReference type="ChEBI" id="CHEBI:30616"/>
        <dbReference type="ChEBI" id="CHEBI:43474"/>
        <dbReference type="ChEBI" id="CHEBI:45075"/>
        <dbReference type="ChEBI" id="CHEBI:61036"/>
        <dbReference type="ChEBI" id="CHEBI:456216"/>
        <dbReference type="EC" id="6.3.4.20"/>
    </reaction>
</comment>
<comment type="cofactor">
    <cofactor evidence="1">
        <name>Zn(2+)</name>
        <dbReference type="ChEBI" id="CHEBI:29105"/>
    </cofactor>
    <text evidence="1">Binds 1 zinc ion per subunit.</text>
</comment>
<comment type="pathway">
    <text evidence="1">Purine metabolism; 7-cyano-7-deazaguanine biosynthesis.</text>
</comment>
<comment type="similarity">
    <text evidence="1">Belongs to the QueC family.</text>
</comment>
<accession>B2I4Y4</accession>
<feature type="chain" id="PRO_1000186646" description="7-cyano-7-deazaguanine synthase">
    <location>
        <begin position="1"/>
        <end position="230"/>
    </location>
</feature>
<feature type="binding site" evidence="1">
    <location>
        <begin position="8"/>
        <end position="18"/>
    </location>
    <ligand>
        <name>ATP</name>
        <dbReference type="ChEBI" id="CHEBI:30616"/>
    </ligand>
</feature>
<feature type="binding site" evidence="1">
    <location>
        <position position="186"/>
    </location>
    <ligand>
        <name>Zn(2+)</name>
        <dbReference type="ChEBI" id="CHEBI:29105"/>
    </ligand>
</feature>
<feature type="binding site" evidence="1">
    <location>
        <position position="196"/>
    </location>
    <ligand>
        <name>Zn(2+)</name>
        <dbReference type="ChEBI" id="CHEBI:29105"/>
    </ligand>
</feature>
<feature type="binding site" evidence="1">
    <location>
        <position position="199"/>
    </location>
    <ligand>
        <name>Zn(2+)</name>
        <dbReference type="ChEBI" id="CHEBI:29105"/>
    </ligand>
</feature>
<feature type="binding site" evidence="1">
    <location>
        <position position="202"/>
    </location>
    <ligand>
        <name>Zn(2+)</name>
        <dbReference type="ChEBI" id="CHEBI:29105"/>
    </ligand>
</feature>
<dbReference type="EC" id="6.3.4.20" evidence="1"/>
<dbReference type="EMBL" id="CP001011">
    <property type="protein sequence ID" value="ACB92429.1"/>
    <property type="molecule type" value="Genomic_DNA"/>
</dbReference>
<dbReference type="RefSeq" id="WP_004089734.1">
    <property type="nucleotide sequence ID" value="NC_010577.1"/>
</dbReference>
<dbReference type="SMR" id="B2I4Y4"/>
<dbReference type="GeneID" id="93904723"/>
<dbReference type="KEGG" id="xfn:XfasM23_0998"/>
<dbReference type="HOGENOM" id="CLU_081854_1_1_6"/>
<dbReference type="UniPathway" id="UPA00391"/>
<dbReference type="Proteomes" id="UP000001698">
    <property type="component" value="Chromosome"/>
</dbReference>
<dbReference type="GO" id="GO:0005524">
    <property type="term" value="F:ATP binding"/>
    <property type="evidence" value="ECO:0007669"/>
    <property type="project" value="UniProtKB-UniRule"/>
</dbReference>
<dbReference type="GO" id="GO:0016879">
    <property type="term" value="F:ligase activity, forming carbon-nitrogen bonds"/>
    <property type="evidence" value="ECO:0007669"/>
    <property type="project" value="UniProtKB-UniRule"/>
</dbReference>
<dbReference type="GO" id="GO:0008270">
    <property type="term" value="F:zinc ion binding"/>
    <property type="evidence" value="ECO:0007669"/>
    <property type="project" value="UniProtKB-UniRule"/>
</dbReference>
<dbReference type="GO" id="GO:0008616">
    <property type="term" value="P:queuosine biosynthetic process"/>
    <property type="evidence" value="ECO:0007669"/>
    <property type="project" value="UniProtKB-UniRule"/>
</dbReference>
<dbReference type="CDD" id="cd01995">
    <property type="entry name" value="QueC-like"/>
    <property type="match status" value="1"/>
</dbReference>
<dbReference type="FunFam" id="3.40.50.620:FF:000131">
    <property type="entry name" value="7-cyano-7-deazaguanine synthase"/>
    <property type="match status" value="1"/>
</dbReference>
<dbReference type="Gene3D" id="3.40.50.620">
    <property type="entry name" value="HUPs"/>
    <property type="match status" value="1"/>
</dbReference>
<dbReference type="HAMAP" id="MF_01633">
    <property type="entry name" value="QueC"/>
    <property type="match status" value="1"/>
</dbReference>
<dbReference type="InterPro" id="IPR018317">
    <property type="entry name" value="QueC"/>
</dbReference>
<dbReference type="InterPro" id="IPR014729">
    <property type="entry name" value="Rossmann-like_a/b/a_fold"/>
</dbReference>
<dbReference type="NCBIfam" id="TIGR00364">
    <property type="entry name" value="7-cyano-7-deazaguanine synthase QueC"/>
    <property type="match status" value="1"/>
</dbReference>
<dbReference type="PANTHER" id="PTHR42914">
    <property type="entry name" value="7-CYANO-7-DEAZAGUANINE SYNTHASE"/>
    <property type="match status" value="1"/>
</dbReference>
<dbReference type="PANTHER" id="PTHR42914:SF1">
    <property type="entry name" value="7-CYANO-7-DEAZAGUANINE SYNTHASE"/>
    <property type="match status" value="1"/>
</dbReference>
<dbReference type="Pfam" id="PF06508">
    <property type="entry name" value="QueC"/>
    <property type="match status" value="1"/>
</dbReference>
<dbReference type="PIRSF" id="PIRSF006293">
    <property type="entry name" value="ExsB"/>
    <property type="match status" value="1"/>
</dbReference>
<dbReference type="SUPFAM" id="SSF52402">
    <property type="entry name" value="Adenine nucleotide alpha hydrolases-like"/>
    <property type="match status" value="1"/>
</dbReference>
<sequence>MKKAVILLSGGMDSAVVTAIAQSQGFMVHALSIRYGQRHTSELDAAVRIARALNVVAHKVVDVDLRSIGGSALTDDIEIPDAGGEGIPVTYVPARNTIMLSLALGWAEVIGAADIFCGVNAVDYSGYPDCRPQFITAFETLANLATKVGVEGTQLHVHAPLQFLSKAEIVHEGLLHGVDFGLTVSCYRADVDGRACGRCDACKLRVAGFADAGVVDPTRYMELPCSLLLL</sequence>
<evidence type="ECO:0000255" key="1">
    <source>
        <dbReference type="HAMAP-Rule" id="MF_01633"/>
    </source>
</evidence>